<feature type="chain" id="PRO_0000330116" description="Assembly factor CBP4">
    <location>
        <begin position="1"/>
        <end position="116"/>
    </location>
</feature>
<feature type="transmembrane region" description="Helical" evidence="2">
    <location>
        <begin position="11"/>
        <end position="27"/>
    </location>
</feature>
<feature type="region of interest" description="Disordered" evidence="3">
    <location>
        <begin position="76"/>
        <end position="116"/>
    </location>
</feature>
<feature type="coiled-coil region" evidence="2">
    <location>
        <begin position="79"/>
        <end position="116"/>
    </location>
</feature>
<evidence type="ECO:0000250" key="1"/>
<evidence type="ECO:0000255" key="2"/>
<evidence type="ECO:0000256" key="3">
    <source>
        <dbReference type="SAM" id="MobiDB-lite"/>
    </source>
</evidence>
<evidence type="ECO:0000305" key="4"/>
<gene>
    <name type="primary">CBP4</name>
    <name type="ORF">HCAG_05078</name>
</gene>
<protein>
    <recommendedName>
        <fullName>Assembly factor CBP4</fullName>
    </recommendedName>
    <alternativeName>
        <fullName>Cytochrome b mRNA-processing protein 4</fullName>
    </alternativeName>
</protein>
<proteinExistence type="inferred from homology"/>
<name>CBP4_AJECN</name>
<reference key="1">
    <citation type="journal article" date="2009" name="Genome Res.">
        <title>Comparative genomic analyses of the human fungal pathogens Coccidioides and their relatives.</title>
        <authorList>
            <person name="Sharpton T.J."/>
            <person name="Stajich J.E."/>
            <person name="Rounsley S.D."/>
            <person name="Gardner M.J."/>
            <person name="Wortman J.R."/>
            <person name="Jordar V.S."/>
            <person name="Maiti R."/>
            <person name="Kodira C.D."/>
            <person name="Neafsey D.E."/>
            <person name="Zeng Q."/>
            <person name="Hung C.-Y."/>
            <person name="McMahan C."/>
            <person name="Muszewska A."/>
            <person name="Grynberg M."/>
            <person name="Mandel M.A."/>
            <person name="Kellner E.M."/>
            <person name="Barker B.M."/>
            <person name="Galgiani J.N."/>
            <person name="Orbach M.J."/>
            <person name="Kirkland T.N."/>
            <person name="Cole G.T."/>
            <person name="Henn M.R."/>
            <person name="Birren B.W."/>
            <person name="Taylor J.W."/>
        </authorList>
    </citation>
    <scope>NUCLEOTIDE SEQUENCE [LARGE SCALE GENOMIC DNA]</scope>
    <source>
        <strain>NAm1 / WU24</strain>
    </source>
</reference>
<accession>A6R620</accession>
<keyword id="KW-0143">Chaperone</keyword>
<keyword id="KW-0175">Coiled coil</keyword>
<keyword id="KW-0472">Membrane</keyword>
<keyword id="KW-0496">Mitochondrion</keyword>
<keyword id="KW-0999">Mitochondrion inner membrane</keyword>
<keyword id="KW-1185">Reference proteome</keyword>
<keyword id="KW-0812">Transmembrane</keyword>
<keyword id="KW-1133">Transmembrane helix</keyword>
<comment type="function">
    <text evidence="1">Essential for the assembly of ubiquinol-cytochrome c reductase. It has a direct effect on the correct occurrence of the Rieske protein, core 4, core 5 and apocytochrome b (By similarity).</text>
</comment>
<comment type="subcellular location">
    <subcellularLocation>
        <location evidence="1">Mitochondrion inner membrane</location>
        <topology evidence="1">Single-pass membrane protein</topology>
    </subcellularLocation>
</comment>
<comment type="similarity">
    <text evidence="4">Belongs to the CBP4 family.</text>
</comment>
<dbReference type="EMBL" id="CH476659">
    <property type="protein sequence ID" value="EDN08579.1"/>
    <property type="molecule type" value="Genomic_DNA"/>
</dbReference>
<dbReference type="KEGG" id="aje:HCAG_05078"/>
<dbReference type="VEuPathDB" id="FungiDB:HCAG_05078"/>
<dbReference type="HOGENOM" id="CLU_136894_0_0_1"/>
<dbReference type="OMA" id="DKPIWVV"/>
<dbReference type="OrthoDB" id="9071at299071"/>
<dbReference type="Proteomes" id="UP000009297">
    <property type="component" value="Unassembled WGS sequence"/>
</dbReference>
<dbReference type="GO" id="GO:0005743">
    <property type="term" value="C:mitochondrial inner membrane"/>
    <property type="evidence" value="ECO:0007669"/>
    <property type="project" value="UniProtKB-SubCell"/>
</dbReference>
<dbReference type="GO" id="GO:0034551">
    <property type="term" value="P:mitochondrial respiratory chain complex III assembly"/>
    <property type="evidence" value="ECO:0007669"/>
    <property type="project" value="TreeGrafter"/>
</dbReference>
<dbReference type="InterPro" id="IPR012420">
    <property type="entry name" value="Cbp4"/>
</dbReference>
<dbReference type="PANTHER" id="PTHR28202">
    <property type="entry name" value="ASSEMBLY FACTOR CBP4"/>
    <property type="match status" value="1"/>
</dbReference>
<dbReference type="PANTHER" id="PTHR28202:SF1">
    <property type="entry name" value="ASSEMBLY FACTOR CBP4"/>
    <property type="match status" value="1"/>
</dbReference>
<dbReference type="Pfam" id="PF07960">
    <property type="entry name" value="CBP4"/>
    <property type="match status" value="1"/>
</dbReference>
<organism>
    <name type="scientific">Ajellomyces capsulatus (strain NAm1 / WU24)</name>
    <name type="common">Darling's disease fungus</name>
    <name type="synonym">Histoplasma capsulatum</name>
    <dbReference type="NCBI Taxonomy" id="2059318"/>
    <lineage>
        <taxon>Eukaryota</taxon>
        <taxon>Fungi</taxon>
        <taxon>Dikarya</taxon>
        <taxon>Ascomycota</taxon>
        <taxon>Pezizomycotina</taxon>
        <taxon>Eurotiomycetes</taxon>
        <taxon>Eurotiomycetidae</taxon>
        <taxon>Onygenales</taxon>
        <taxon>Ajellomycetaceae</taxon>
        <taxon>Histoplasma</taxon>
    </lineage>
</organism>
<sequence>MPRIGTTVKMIVAGVLLCIGGPALVQYVRPTEEELFQKFNPELQKRNLETRDQRQKDFDSFVTQLKTHAKSDKSIWHAIKESETTNRREVETRRKAELEEAERQKAQIRKELAEGS</sequence>